<comment type="function">
    <text evidence="1">With CysN forms the ATP sulfurylase (ATPS) that catalyzes the adenylation of sulfate producing adenosine 5'-phosphosulfate (APS) and diphosphate, the first enzymatic step in sulfur assimilation pathway. APS synthesis involves the formation of a high-energy phosphoric-sulfuric acid anhydride bond driven by GTP hydrolysis by CysN coupled to ATP hydrolysis by CysD.</text>
</comment>
<comment type="catalytic activity">
    <reaction evidence="1">
        <text>sulfate + ATP + H(+) = adenosine 5'-phosphosulfate + diphosphate</text>
        <dbReference type="Rhea" id="RHEA:18133"/>
        <dbReference type="ChEBI" id="CHEBI:15378"/>
        <dbReference type="ChEBI" id="CHEBI:16189"/>
        <dbReference type="ChEBI" id="CHEBI:30616"/>
        <dbReference type="ChEBI" id="CHEBI:33019"/>
        <dbReference type="ChEBI" id="CHEBI:58243"/>
        <dbReference type="EC" id="2.7.7.4"/>
    </reaction>
</comment>
<comment type="pathway">
    <text evidence="1">Sulfur metabolism; hydrogen sulfide biosynthesis; sulfite from sulfate: step 1/3.</text>
</comment>
<comment type="subunit">
    <text evidence="1">Heterodimer composed of CysD, the smaller subunit, and CysN.</text>
</comment>
<comment type="similarity">
    <text evidence="1">Belongs to the PAPS reductase family. CysD subfamily.</text>
</comment>
<reference key="1">
    <citation type="journal article" date="2011" name="Appl. Environ. Microbiol.">
        <title>Genomic potential of Marinobacter aquaeolei, a biogeochemical 'opportunitroph'.</title>
        <authorList>
            <person name="Singer E."/>
            <person name="Webb E.A."/>
            <person name="Nelson W.C."/>
            <person name="Heidelberg J.F."/>
            <person name="Ivanova N."/>
            <person name="Pati A."/>
            <person name="Edwards K.J."/>
        </authorList>
    </citation>
    <scope>NUCLEOTIDE SEQUENCE [LARGE SCALE GENOMIC DNA]</scope>
    <source>
        <strain>ATCC 700491 / DSM 11845 / VT8</strain>
    </source>
</reference>
<sequence length="304" mass="34968">MTLTPPKKTHLKQLEAESIHIIREVAAEFDNPVMLYSIGKDSAVMLHLAMKAFAPGKPPFPLMHVDTTWKFREMITFRDQMAEKLGMKLLVHTNQEGVEQGIGPFTHGSAKHTDVMKTQALKQALDKYGFDAAFGGARRDEEKSRAKERVYSFRDKFHRWDPKNQRPELWNLYNGKVNKGESIRVFPLSNWTELDIWQYIYLENIDIVPLYYAAERPVVERDGTLIMVDDDRMPLEPGEQPMMKMVRFRTLGCYPLTGAVESEAATLPDIIQEMLLTTTSERQGRVIDHDGAASMEQKKREGYF</sequence>
<evidence type="ECO:0000255" key="1">
    <source>
        <dbReference type="HAMAP-Rule" id="MF_00064"/>
    </source>
</evidence>
<dbReference type="EC" id="2.7.7.4" evidence="1"/>
<dbReference type="EMBL" id="CP000514">
    <property type="protein sequence ID" value="ABM19699.1"/>
    <property type="molecule type" value="Genomic_DNA"/>
</dbReference>
<dbReference type="RefSeq" id="WP_011786070.1">
    <property type="nucleotide sequence ID" value="NC_008740.1"/>
</dbReference>
<dbReference type="SMR" id="A1U3Y0"/>
<dbReference type="STRING" id="351348.Maqu_2624"/>
<dbReference type="KEGG" id="maq:Maqu_2624"/>
<dbReference type="eggNOG" id="COG0175">
    <property type="taxonomic scope" value="Bacteria"/>
</dbReference>
<dbReference type="HOGENOM" id="CLU_043026_0_0_6"/>
<dbReference type="OrthoDB" id="9772604at2"/>
<dbReference type="UniPathway" id="UPA00140">
    <property type="reaction ID" value="UER00204"/>
</dbReference>
<dbReference type="Proteomes" id="UP000000998">
    <property type="component" value="Chromosome"/>
</dbReference>
<dbReference type="GO" id="GO:0005524">
    <property type="term" value="F:ATP binding"/>
    <property type="evidence" value="ECO:0007669"/>
    <property type="project" value="UniProtKB-KW"/>
</dbReference>
<dbReference type="GO" id="GO:0004781">
    <property type="term" value="F:sulfate adenylyltransferase (ATP) activity"/>
    <property type="evidence" value="ECO:0007669"/>
    <property type="project" value="UniProtKB-UniRule"/>
</dbReference>
<dbReference type="GO" id="GO:0070814">
    <property type="term" value="P:hydrogen sulfide biosynthetic process"/>
    <property type="evidence" value="ECO:0007669"/>
    <property type="project" value="UniProtKB-UniRule"/>
</dbReference>
<dbReference type="GO" id="GO:0000103">
    <property type="term" value="P:sulfate assimilation"/>
    <property type="evidence" value="ECO:0007669"/>
    <property type="project" value="UniProtKB-UniRule"/>
</dbReference>
<dbReference type="CDD" id="cd23946">
    <property type="entry name" value="Sulfate_adenylyltransferase_2"/>
    <property type="match status" value="1"/>
</dbReference>
<dbReference type="FunFam" id="3.40.50.620:FF:000002">
    <property type="entry name" value="Sulfate adenylyltransferase subunit 2"/>
    <property type="match status" value="1"/>
</dbReference>
<dbReference type="Gene3D" id="3.40.50.620">
    <property type="entry name" value="HUPs"/>
    <property type="match status" value="1"/>
</dbReference>
<dbReference type="HAMAP" id="MF_00064">
    <property type="entry name" value="Sulf_adenylyltr_sub2"/>
    <property type="match status" value="1"/>
</dbReference>
<dbReference type="InterPro" id="IPR002500">
    <property type="entry name" value="PAPS_reduct_dom"/>
</dbReference>
<dbReference type="InterPro" id="IPR014729">
    <property type="entry name" value="Rossmann-like_a/b/a_fold"/>
</dbReference>
<dbReference type="InterPro" id="IPR011784">
    <property type="entry name" value="SO4_adenylTrfase_ssu"/>
</dbReference>
<dbReference type="InterPro" id="IPR050128">
    <property type="entry name" value="Sulfate_adenylyltrnsfr_sub2"/>
</dbReference>
<dbReference type="NCBIfam" id="TIGR02039">
    <property type="entry name" value="CysD"/>
    <property type="match status" value="1"/>
</dbReference>
<dbReference type="NCBIfam" id="NF003587">
    <property type="entry name" value="PRK05253.1"/>
    <property type="match status" value="1"/>
</dbReference>
<dbReference type="NCBIfam" id="NF009214">
    <property type="entry name" value="PRK12563.1"/>
    <property type="match status" value="1"/>
</dbReference>
<dbReference type="PANTHER" id="PTHR43196">
    <property type="entry name" value="SULFATE ADENYLYLTRANSFERASE SUBUNIT 2"/>
    <property type="match status" value="1"/>
</dbReference>
<dbReference type="PANTHER" id="PTHR43196:SF1">
    <property type="entry name" value="SULFATE ADENYLYLTRANSFERASE SUBUNIT 2"/>
    <property type="match status" value="1"/>
</dbReference>
<dbReference type="Pfam" id="PF01507">
    <property type="entry name" value="PAPS_reduct"/>
    <property type="match status" value="1"/>
</dbReference>
<dbReference type="PIRSF" id="PIRSF002936">
    <property type="entry name" value="CysDAde_trans"/>
    <property type="match status" value="1"/>
</dbReference>
<dbReference type="SUPFAM" id="SSF52402">
    <property type="entry name" value="Adenine nucleotide alpha hydrolases-like"/>
    <property type="match status" value="1"/>
</dbReference>
<gene>
    <name evidence="1" type="primary">cysD1</name>
    <name type="ordered locus">Maqu_2624</name>
</gene>
<accession>A1U3Y0</accession>
<organism>
    <name type="scientific">Marinobacter nauticus (strain ATCC 700491 / DSM 11845 / VT8)</name>
    <name type="common">Marinobacter aquaeolei</name>
    <dbReference type="NCBI Taxonomy" id="351348"/>
    <lineage>
        <taxon>Bacteria</taxon>
        <taxon>Pseudomonadati</taxon>
        <taxon>Pseudomonadota</taxon>
        <taxon>Gammaproteobacteria</taxon>
        <taxon>Pseudomonadales</taxon>
        <taxon>Marinobacteraceae</taxon>
        <taxon>Marinobacter</taxon>
    </lineage>
</organism>
<name>CYSD1_MARN8</name>
<proteinExistence type="inferred from homology"/>
<keyword id="KW-0067">ATP-binding</keyword>
<keyword id="KW-0547">Nucleotide-binding</keyword>
<keyword id="KW-0548">Nucleotidyltransferase</keyword>
<keyword id="KW-0808">Transferase</keyword>
<protein>
    <recommendedName>
        <fullName evidence="1">Sulfate adenylyltransferase subunit 2 1</fullName>
        <ecNumber evidence="1">2.7.7.4</ecNumber>
    </recommendedName>
    <alternativeName>
        <fullName evidence="1">ATP-sulfurylase small subunit 1</fullName>
    </alternativeName>
    <alternativeName>
        <fullName evidence="1">Sulfate adenylate transferase 1</fullName>
        <shortName evidence="1">SAT 1</shortName>
    </alternativeName>
</protein>
<feature type="chain" id="PRO_0000340200" description="Sulfate adenylyltransferase subunit 2 1">
    <location>
        <begin position="1"/>
        <end position="304"/>
    </location>
</feature>